<feature type="chain" id="PRO_0000046459" description="DNA polymerase epsilon catalytic subunit A">
    <location>
        <begin position="1"/>
        <end position="2217"/>
    </location>
</feature>
<feature type="zinc finger region" description="CysA-type" evidence="2">
    <location>
        <begin position="2104"/>
        <end position="2129"/>
    </location>
</feature>
<feature type="short sequence motif" description="CysB motif" evidence="2">
    <location>
        <begin position="2160"/>
        <end position="2177"/>
    </location>
</feature>
<feature type="binding site" evidence="2">
    <location>
        <position position="2104"/>
    </location>
    <ligand>
        <name>Zn(2+)</name>
        <dbReference type="ChEBI" id="CHEBI:29105"/>
    </ligand>
</feature>
<feature type="binding site" evidence="2">
    <location>
        <position position="2107"/>
    </location>
    <ligand>
        <name>Zn(2+)</name>
        <dbReference type="ChEBI" id="CHEBI:29105"/>
    </ligand>
</feature>
<feature type="binding site" evidence="2">
    <location>
        <position position="2126"/>
    </location>
    <ligand>
        <name>Zn(2+)</name>
        <dbReference type="ChEBI" id="CHEBI:29105"/>
    </ligand>
</feature>
<feature type="binding site" evidence="2">
    <location>
        <position position="2129"/>
    </location>
    <ligand>
        <name>Zn(2+)</name>
        <dbReference type="ChEBI" id="CHEBI:29105"/>
    </ligand>
</feature>
<feature type="binding site" evidence="2">
    <location>
        <position position="2160"/>
    </location>
    <ligand>
        <name>[4Fe-4S] cluster</name>
        <dbReference type="ChEBI" id="CHEBI:49883"/>
    </ligand>
</feature>
<feature type="binding site" evidence="2">
    <location>
        <position position="2163"/>
    </location>
    <ligand>
        <name>[4Fe-4S] cluster</name>
        <dbReference type="ChEBI" id="CHEBI:49883"/>
    </ligand>
</feature>
<feature type="binding site" evidence="2">
    <location>
        <position position="2175"/>
    </location>
    <ligand>
        <name>[4Fe-4S] cluster</name>
        <dbReference type="ChEBI" id="CHEBI:49883"/>
    </ligand>
</feature>
<feature type="binding site" evidence="2">
    <location>
        <position position="2177"/>
    </location>
    <ligand>
        <name>[4Fe-4S] cluster</name>
        <dbReference type="ChEBI" id="CHEBI:49883"/>
    </ligand>
</feature>
<sequence length="2217" mass="256211">MSTARFKRGNGQAGSLSNGYAVTAQQLLQAAKVDDIDAMMGFERYVPPQYNGRVDPDRLDQVPGRTGWLVNMHPTLISEEIASGGGSDYNPSAAGIAGVDFYFLDEEGGSFKSSITYDPYFFVTVTDDARLNDVEEFLKKYLETCLKDISTLKKEDLKLDNHLLGLQKSLIKLSFVNSNQLFEARKLLRPILAENESNKQQRNVFKHSNISNGNGMLSSNVNRFASSSVQDKKDAKQYIEDIREYDVPYHVRVSIDKDIRVGKWYKVTHEGFFVWPDKVAFADPVVLAFDIETTKAPLKFPEASVDQVMMISYMIDGDGFLITNREIISEDIEDFEYTPKPELQGHVTIFNEVDELAVLQRFFEHIRDVRPTVISTFNGDFFDWPFIEKRASVRGLDMFEEIGFAPDSEGEYKSSYCVHMDCFRWVKRDSYLPQGSQGLKAVTQAKLGYNPIELDPELMTPYAYERPQQLSEYSVSDAVATYYLYMKYVHPFIFSLCTIIPLNPDEVLRKGTGTLCEMLLMVQAYQGNILLPNKHTDPLERFYDGHLLESETYVGGHVESLEAGVFRSDLATEFKIDTSAIDELIEDLPHALKFAVEVENKAKMEDVTNFEEIKEQIKEQLLELKENNKRHEKPLIYHVDVASMYPNIMTTNRLQPDSIKTEKDCASCDFNRPGKSCARRLKWAWRGEFYPAKSDEYNMIKRALQNETFPNKNKFSKKPYLTFDELSYSEQVAHIKKRLTEYSKKVYHRIKVSEIVEREAIVCQRENPFYVNTVKSFRDRRYEFKGLAKKWKGKMSSIDRNDKHGKDEANKMVVLYDSLQLAHKVILNSFYGYVMRKGSRWYSMEMAGITCLTGATIIQMARALVERVGRPLELDTDGIWCILPKSFPENFFLKLENGKKLFVSYPCSMLNYRVHQKFTNHQYQELVDPVKHKYETHSENTIFFEVDGPYKAMILPTSKEEGKGIKKRYAVFNEDGSLAELKGFELKRRGELQLIKNFQSDIFKVFLDGKTLEECYASVAAVSNRWLDILDNKGSMLEDEDLVSLICENRSMSKSLKEYEGQKSTSITTAKRLGEFLGEDMVKDKGLQCKYIISSKPHGAPVTERAIPVAIFSSDINVKRSFLRRWTMDHSLDNFDIRTILDWGYYRERLASVIQKIITIPAALQNVPNPVPRVEHPDWLKRRIAVKEDKFKQSKLERFLSKSSQEPQNRRIKDIEELFHEDDDIKRIKLAKVTSRNKNKRNRDVQKNDEESLVLPATMPSMEEDYVSWLSYQKIKWKIQRRDRIRRTQLFGKSGETNSRSVLGSMIRKQAEMFANGSWEVLQYRDNYEAGAVDAYVIINGKVQVLKIYVPRTLYINFKTDSVPLKKIKNCEVERSNAILPNDARINNDSASPLFKLTLSEQVYLDELEDSGSVLNDESVLGIYESHISPAQKALMDLGTTISFKSKKVGSLGKSLQDGFHLKDLTSVGNDRYLSHFDLNVCYLLHIDTNIDYEFFVIFRSWENKLSIFVKKPSNNAQELLESTIIGIFKEQYHKRKDRITKFNKYINLSDNVDMNSNHYTDKKKLFKAINQEFAMIKEQKGQQVLLLMQSPFPSLIKKNIRYSTQIPIIELSMNILALPQLNWQNVMINKLCSYIISTSYWVSHLVSLSQHSNVPICNINLEKMDFVIDVIYARRLKLDNIILWWNEQSPLPDHGGMENDFDQNTSWIMNDLDFPNINVPDVYDNVVLEVSIENLVVNTILCSTLINEAEGSDLVDMNTVDVSDKPVGNNQGIVQDSFSHDALAVLKSLLKEWWDRALEKNITADLLVNSLVSWVYSTDSKLFDGSLRYHIHNLTKKSLFQLMNEFNELGSFIVSADRNRLLIKTNKISPETCYAYSHYMIKSIRSNPMFTYLDLNIERYWDLLIWMDKYNFSGLSCSQIEEREKQDYTAYSNWQIKYYLPRIYQSEFEDWAMIILDSMVKTKRAFLESSYGTQRATQIVTGLTPQSDTEDISPLSSFSKEIGKPLLQRVNKLFRNQREFILDPGFSEDYAFPILPGSHIKMDDPLLEFIKSLFQILLLSKSTTLEVRQLRKEVLKFLEIREFAKEAEFQNPSDSLVINGILCEYCSYVSDLDLCRDGLDGKFQCPRCDKSINDSLLQEHMIQNLAIEYQTYITQDLRCEKCHTVKRDLMSTNCNCSGNWVCTTKPEKLSNIVKIYKQVAEFYNYSLVKNALESLY</sequence>
<keyword id="KW-0004">4Fe-4S</keyword>
<keyword id="KW-0235">DNA replication</keyword>
<keyword id="KW-0238">DNA-binding</keyword>
<keyword id="KW-0239">DNA-directed DNA polymerase</keyword>
<keyword id="KW-0408">Iron</keyword>
<keyword id="KW-0411">Iron-sulfur</keyword>
<keyword id="KW-0479">Metal-binding</keyword>
<keyword id="KW-0548">Nucleotidyltransferase</keyword>
<keyword id="KW-0539">Nucleus</keyword>
<keyword id="KW-1185">Reference proteome</keyword>
<keyword id="KW-0808">Transferase</keyword>
<keyword id="KW-0862">Zinc</keyword>
<keyword id="KW-0863">Zinc-finger</keyword>
<proteinExistence type="inferred from homology"/>
<reference key="1">
    <citation type="journal article" date="2004" name="Nature">
        <title>Genome evolution in yeasts.</title>
        <authorList>
            <person name="Dujon B."/>
            <person name="Sherman D."/>
            <person name="Fischer G."/>
            <person name="Durrens P."/>
            <person name="Casaregola S."/>
            <person name="Lafontaine I."/>
            <person name="de Montigny J."/>
            <person name="Marck C."/>
            <person name="Neuveglise C."/>
            <person name="Talla E."/>
            <person name="Goffard N."/>
            <person name="Frangeul L."/>
            <person name="Aigle M."/>
            <person name="Anthouard V."/>
            <person name="Babour A."/>
            <person name="Barbe V."/>
            <person name="Barnay S."/>
            <person name="Blanchin S."/>
            <person name="Beckerich J.-M."/>
            <person name="Beyne E."/>
            <person name="Bleykasten C."/>
            <person name="Boisrame A."/>
            <person name="Boyer J."/>
            <person name="Cattolico L."/>
            <person name="Confanioleri F."/>
            <person name="de Daruvar A."/>
            <person name="Despons L."/>
            <person name="Fabre E."/>
            <person name="Fairhead C."/>
            <person name="Ferry-Dumazet H."/>
            <person name="Groppi A."/>
            <person name="Hantraye F."/>
            <person name="Hennequin C."/>
            <person name="Jauniaux N."/>
            <person name="Joyet P."/>
            <person name="Kachouri R."/>
            <person name="Kerrest A."/>
            <person name="Koszul R."/>
            <person name="Lemaire M."/>
            <person name="Lesur I."/>
            <person name="Ma L."/>
            <person name="Muller H."/>
            <person name="Nicaud J.-M."/>
            <person name="Nikolski M."/>
            <person name="Oztas S."/>
            <person name="Ozier-Kalogeropoulos O."/>
            <person name="Pellenz S."/>
            <person name="Potier S."/>
            <person name="Richard G.-F."/>
            <person name="Straub M.-L."/>
            <person name="Suleau A."/>
            <person name="Swennen D."/>
            <person name="Tekaia F."/>
            <person name="Wesolowski-Louvel M."/>
            <person name="Westhof E."/>
            <person name="Wirth B."/>
            <person name="Zeniou-Meyer M."/>
            <person name="Zivanovic Y."/>
            <person name="Bolotin-Fukuhara M."/>
            <person name="Thierry A."/>
            <person name="Bouchier C."/>
            <person name="Caudron B."/>
            <person name="Scarpelli C."/>
            <person name="Gaillardin C."/>
            <person name="Weissenbach J."/>
            <person name="Wincker P."/>
            <person name="Souciet J.-L."/>
        </authorList>
    </citation>
    <scope>NUCLEOTIDE SEQUENCE [LARGE SCALE GENOMIC DNA]</scope>
    <source>
        <strain>ATCC 2001 / BCRC 20586 / JCM 3761 / NBRC 0622 / NRRL Y-65 / CBS 138</strain>
    </source>
</reference>
<comment type="function">
    <text evidence="1">DNA polymerase II participates in chromosomal DNA replication.</text>
</comment>
<comment type="catalytic activity">
    <reaction evidence="2">
        <text>DNA(n) + a 2'-deoxyribonucleoside 5'-triphosphate = DNA(n+1) + diphosphate</text>
        <dbReference type="Rhea" id="RHEA:22508"/>
        <dbReference type="Rhea" id="RHEA-COMP:17339"/>
        <dbReference type="Rhea" id="RHEA-COMP:17340"/>
        <dbReference type="ChEBI" id="CHEBI:33019"/>
        <dbReference type="ChEBI" id="CHEBI:61560"/>
        <dbReference type="ChEBI" id="CHEBI:173112"/>
        <dbReference type="EC" id="2.7.7.7"/>
    </reaction>
</comment>
<comment type="cofactor">
    <cofactor evidence="2">
        <name>[4Fe-4S] cluster</name>
        <dbReference type="ChEBI" id="CHEBI:49883"/>
    </cofactor>
    <text evidence="2">Binds 1 [4Fe-4S] cluster.</text>
</comment>
<comment type="subunit">
    <text evidence="1">Heterotetramer. Consists of 4 subunits: POL2, DPB2, DPB3 and DPB4 (By similarity).</text>
</comment>
<comment type="subcellular location">
    <subcellularLocation>
        <location evidence="1">Nucleus</location>
    </subcellularLocation>
</comment>
<comment type="domain">
    <text evidence="2">The CysA-type zinc finger is required for PCNA-binding.</text>
</comment>
<comment type="domain">
    <text evidence="2">The CysB motif binds 1 4Fe-4S cluster and is required for the formation of polymerase complexes.</text>
</comment>
<comment type="similarity">
    <text evidence="3">Belongs to the DNA polymerase type-B family.</text>
</comment>
<gene>
    <name type="primary">POL2</name>
    <name type="ordered locus">CAGL0J08030g</name>
</gene>
<dbReference type="EC" id="2.7.7.7" evidence="2"/>
<dbReference type="EMBL" id="CR380956">
    <property type="protein sequence ID" value="CAG61008.1"/>
    <property type="molecule type" value="Genomic_DNA"/>
</dbReference>
<dbReference type="RefSeq" id="XP_448057.1">
    <property type="nucleotide sequence ID" value="XM_448057.1"/>
</dbReference>
<dbReference type="SMR" id="Q6FNY7"/>
<dbReference type="FunCoup" id="Q6FNY7">
    <property type="interactions" value="789"/>
</dbReference>
<dbReference type="STRING" id="284593.Q6FNY7"/>
<dbReference type="EnsemblFungi" id="CAGL0J08030g-T">
    <property type="protein sequence ID" value="CAGL0J08030g-T-p1"/>
    <property type="gene ID" value="CAGL0J08030g"/>
</dbReference>
<dbReference type="KEGG" id="cgr:2889864"/>
<dbReference type="CGD" id="CAL0133406">
    <property type="gene designation" value="CAGL0J08030g"/>
</dbReference>
<dbReference type="VEuPathDB" id="FungiDB:CAGL0J08030g"/>
<dbReference type="eggNOG" id="KOG1798">
    <property type="taxonomic scope" value="Eukaryota"/>
</dbReference>
<dbReference type="HOGENOM" id="CLU_000556_0_1_1"/>
<dbReference type="InParanoid" id="Q6FNY7"/>
<dbReference type="OMA" id="MLDQCRY"/>
<dbReference type="Proteomes" id="UP000002428">
    <property type="component" value="Chromosome J"/>
</dbReference>
<dbReference type="GO" id="GO:0140445">
    <property type="term" value="C:chromosome, telomeric repeat region"/>
    <property type="evidence" value="ECO:0007669"/>
    <property type="project" value="EnsemblFungi"/>
</dbReference>
<dbReference type="GO" id="GO:0008622">
    <property type="term" value="C:epsilon DNA polymerase complex"/>
    <property type="evidence" value="ECO:0007669"/>
    <property type="project" value="EnsemblFungi"/>
</dbReference>
<dbReference type="GO" id="GO:0062040">
    <property type="term" value="C:fungal biofilm matrix"/>
    <property type="evidence" value="ECO:0000314"/>
    <property type="project" value="CGD"/>
</dbReference>
<dbReference type="GO" id="GO:0043596">
    <property type="term" value="C:nuclear replication fork"/>
    <property type="evidence" value="ECO:0007669"/>
    <property type="project" value="EnsemblFungi"/>
</dbReference>
<dbReference type="GO" id="GO:0051539">
    <property type="term" value="F:4 iron, 4 sulfur cluster binding"/>
    <property type="evidence" value="ECO:0007669"/>
    <property type="project" value="UniProtKB-KW"/>
</dbReference>
<dbReference type="GO" id="GO:0003887">
    <property type="term" value="F:DNA-directed DNA polymerase activity"/>
    <property type="evidence" value="ECO:0007669"/>
    <property type="project" value="UniProtKB-KW"/>
</dbReference>
<dbReference type="GO" id="GO:0003690">
    <property type="term" value="F:double-stranded DNA binding"/>
    <property type="evidence" value="ECO:0007669"/>
    <property type="project" value="EnsemblFungi"/>
</dbReference>
<dbReference type="GO" id="GO:0000166">
    <property type="term" value="F:nucleotide binding"/>
    <property type="evidence" value="ECO:0007669"/>
    <property type="project" value="InterPro"/>
</dbReference>
<dbReference type="GO" id="GO:0008310">
    <property type="term" value="F:single-stranded DNA 3'-5' DNA exonuclease activity"/>
    <property type="evidence" value="ECO:0007669"/>
    <property type="project" value="EnsemblFungi"/>
</dbReference>
<dbReference type="GO" id="GO:0003697">
    <property type="term" value="F:single-stranded DNA binding"/>
    <property type="evidence" value="ECO:0007669"/>
    <property type="project" value="EnsemblFungi"/>
</dbReference>
<dbReference type="GO" id="GO:0032183">
    <property type="term" value="F:SUMO binding"/>
    <property type="evidence" value="ECO:0007669"/>
    <property type="project" value="EnsemblFungi"/>
</dbReference>
<dbReference type="GO" id="GO:0008270">
    <property type="term" value="F:zinc ion binding"/>
    <property type="evidence" value="ECO:0007669"/>
    <property type="project" value="UniProtKB-KW"/>
</dbReference>
<dbReference type="GO" id="GO:0006287">
    <property type="term" value="P:base-excision repair, gap-filling"/>
    <property type="evidence" value="ECO:0007669"/>
    <property type="project" value="TreeGrafter"/>
</dbReference>
<dbReference type="GO" id="GO:0034080">
    <property type="term" value="P:CENP-A containing chromatin assembly"/>
    <property type="evidence" value="ECO:0007669"/>
    <property type="project" value="EnsemblFungi"/>
</dbReference>
<dbReference type="GO" id="GO:0140529">
    <property type="term" value="P:CMG complex assembly"/>
    <property type="evidence" value="ECO:0007669"/>
    <property type="project" value="EnsemblFungi"/>
</dbReference>
<dbReference type="GO" id="GO:0045004">
    <property type="term" value="P:DNA replication proofreading"/>
    <property type="evidence" value="ECO:0007669"/>
    <property type="project" value="EnsemblFungi"/>
</dbReference>
<dbReference type="GO" id="GO:0006303">
    <property type="term" value="P:double-strand break repair via nonhomologous end joining"/>
    <property type="evidence" value="ECO:0007669"/>
    <property type="project" value="EnsemblFungi"/>
</dbReference>
<dbReference type="GO" id="GO:0042276">
    <property type="term" value="P:error-prone translesion synthesis"/>
    <property type="evidence" value="ECO:0007669"/>
    <property type="project" value="EnsemblFungi"/>
</dbReference>
<dbReference type="GO" id="GO:0035822">
    <property type="term" value="P:gene conversion"/>
    <property type="evidence" value="ECO:0007669"/>
    <property type="project" value="EnsemblFungi"/>
</dbReference>
<dbReference type="GO" id="GO:0033314">
    <property type="term" value="P:mitotic DNA replication checkpoint signaling"/>
    <property type="evidence" value="ECO:0007669"/>
    <property type="project" value="EnsemblFungi"/>
</dbReference>
<dbReference type="GO" id="GO:1902975">
    <property type="term" value="P:mitotic DNA replication initiation"/>
    <property type="evidence" value="ECO:0007669"/>
    <property type="project" value="EnsemblFungi"/>
</dbReference>
<dbReference type="GO" id="GO:1903460">
    <property type="term" value="P:mitotic DNA replication leading strand elongation"/>
    <property type="evidence" value="ECO:0007669"/>
    <property type="project" value="EnsemblFungi"/>
</dbReference>
<dbReference type="GO" id="GO:0031573">
    <property type="term" value="P:mitotic intra-S DNA damage checkpoint signaling"/>
    <property type="evidence" value="ECO:0007669"/>
    <property type="project" value="EnsemblFungi"/>
</dbReference>
<dbReference type="GO" id="GO:0007064">
    <property type="term" value="P:mitotic sister chromatid cohesion"/>
    <property type="evidence" value="ECO:0007669"/>
    <property type="project" value="EnsemblFungi"/>
</dbReference>
<dbReference type="GO" id="GO:0006297">
    <property type="term" value="P:nucleotide-excision repair, DNA gap filling"/>
    <property type="evidence" value="ECO:0007669"/>
    <property type="project" value="EnsemblFungi"/>
</dbReference>
<dbReference type="GO" id="GO:0031048">
    <property type="term" value="P:regulatory ncRNA-mediated heterochromatin formation"/>
    <property type="evidence" value="ECO:0007669"/>
    <property type="project" value="EnsemblFungi"/>
</dbReference>
<dbReference type="CDD" id="cd05779">
    <property type="entry name" value="DNA_polB_epsilon_exo"/>
    <property type="match status" value="1"/>
</dbReference>
<dbReference type="CDD" id="cd05535">
    <property type="entry name" value="POLBc_epsilon"/>
    <property type="match status" value="1"/>
</dbReference>
<dbReference type="FunFam" id="1.10.132.60:FF:000002">
    <property type="entry name" value="DNA polymerase epsilon catalytic subunit"/>
    <property type="match status" value="1"/>
</dbReference>
<dbReference type="FunFam" id="1.10.287.690:FF:000005">
    <property type="entry name" value="DNA polymerase epsilon catalytic subunit"/>
    <property type="match status" value="1"/>
</dbReference>
<dbReference type="FunFam" id="3.30.420.10:FF:000010">
    <property type="entry name" value="DNA polymerase epsilon catalytic subunit"/>
    <property type="match status" value="1"/>
</dbReference>
<dbReference type="FunFam" id="3.90.1600.10:FF:000006">
    <property type="entry name" value="DNA polymerase epsilon catalytic subunit"/>
    <property type="match status" value="1"/>
</dbReference>
<dbReference type="Gene3D" id="1.10.132.60">
    <property type="entry name" value="DNA polymerase family B, C-terminal domain"/>
    <property type="match status" value="1"/>
</dbReference>
<dbReference type="Gene3D" id="3.30.342.10">
    <property type="entry name" value="DNA Polymerase, chain B, domain 1"/>
    <property type="match status" value="1"/>
</dbReference>
<dbReference type="Gene3D" id="3.90.1600.10">
    <property type="entry name" value="Palm domain of DNA polymerase"/>
    <property type="match status" value="1"/>
</dbReference>
<dbReference type="Gene3D" id="3.30.420.10">
    <property type="entry name" value="Ribonuclease H-like superfamily/Ribonuclease H"/>
    <property type="match status" value="1"/>
</dbReference>
<dbReference type="InterPro" id="IPR006172">
    <property type="entry name" value="DNA-dir_DNA_pol_B"/>
</dbReference>
<dbReference type="InterPro" id="IPR006133">
    <property type="entry name" value="DNA-dir_DNA_pol_B_exonuc"/>
</dbReference>
<dbReference type="InterPro" id="IPR043502">
    <property type="entry name" value="DNA/RNA_pol_sf"/>
</dbReference>
<dbReference type="InterPro" id="IPR042087">
    <property type="entry name" value="DNA_pol_B_thumb"/>
</dbReference>
<dbReference type="InterPro" id="IPR013697">
    <property type="entry name" value="DNA_pol_e_suA_C"/>
</dbReference>
<dbReference type="InterPro" id="IPR023211">
    <property type="entry name" value="DNA_pol_palm_dom_sf"/>
</dbReference>
<dbReference type="InterPro" id="IPR029703">
    <property type="entry name" value="POL2"/>
</dbReference>
<dbReference type="InterPro" id="IPR055191">
    <property type="entry name" value="POL2_thumb"/>
</dbReference>
<dbReference type="InterPro" id="IPR012337">
    <property type="entry name" value="RNaseH-like_sf"/>
</dbReference>
<dbReference type="InterPro" id="IPR036397">
    <property type="entry name" value="RNaseH_sf"/>
</dbReference>
<dbReference type="InterPro" id="IPR054475">
    <property type="entry name" value="Znf-DPOE"/>
</dbReference>
<dbReference type="PANTHER" id="PTHR10670">
    <property type="entry name" value="DNA POLYMERASE EPSILON CATALYTIC SUBUNIT A"/>
    <property type="match status" value="1"/>
</dbReference>
<dbReference type="PANTHER" id="PTHR10670:SF0">
    <property type="entry name" value="DNA POLYMERASE EPSILON CATALYTIC SUBUNIT A"/>
    <property type="match status" value="1"/>
</dbReference>
<dbReference type="Pfam" id="PF03104">
    <property type="entry name" value="DNA_pol_B_exo1"/>
    <property type="match status" value="1"/>
</dbReference>
<dbReference type="Pfam" id="PF08490">
    <property type="entry name" value="DUF1744"/>
    <property type="match status" value="1"/>
</dbReference>
<dbReference type="Pfam" id="PF22634">
    <property type="entry name" value="POL2_thumb"/>
    <property type="match status" value="1"/>
</dbReference>
<dbReference type="Pfam" id="PF22912">
    <property type="entry name" value="zf-DPOE"/>
    <property type="match status" value="1"/>
</dbReference>
<dbReference type="SMART" id="SM01159">
    <property type="entry name" value="DUF1744"/>
    <property type="match status" value="1"/>
</dbReference>
<dbReference type="SMART" id="SM00486">
    <property type="entry name" value="POLBc"/>
    <property type="match status" value="1"/>
</dbReference>
<dbReference type="SUPFAM" id="SSF56672">
    <property type="entry name" value="DNA/RNA polymerases"/>
    <property type="match status" value="1"/>
</dbReference>
<dbReference type="SUPFAM" id="SSF53098">
    <property type="entry name" value="Ribonuclease H-like"/>
    <property type="match status" value="1"/>
</dbReference>
<name>DPOE_CANGA</name>
<organism>
    <name type="scientific">Candida glabrata (strain ATCC 2001 / BCRC 20586 / JCM 3761 / NBRC 0622 / NRRL Y-65 / CBS 138)</name>
    <name type="common">Yeast</name>
    <name type="synonym">Nakaseomyces glabratus</name>
    <dbReference type="NCBI Taxonomy" id="284593"/>
    <lineage>
        <taxon>Eukaryota</taxon>
        <taxon>Fungi</taxon>
        <taxon>Dikarya</taxon>
        <taxon>Ascomycota</taxon>
        <taxon>Saccharomycotina</taxon>
        <taxon>Saccharomycetes</taxon>
        <taxon>Saccharomycetales</taxon>
        <taxon>Saccharomycetaceae</taxon>
        <taxon>Nakaseomyces</taxon>
    </lineage>
</organism>
<protein>
    <recommendedName>
        <fullName>DNA polymerase epsilon catalytic subunit A</fullName>
        <ecNumber evidence="2">2.7.7.7</ecNumber>
    </recommendedName>
    <alternativeName>
        <fullName>DNA polymerase II subunit A</fullName>
    </alternativeName>
</protein>
<accession>Q6FNY7</accession>
<evidence type="ECO:0000250" key="1"/>
<evidence type="ECO:0000250" key="2">
    <source>
        <dbReference type="UniProtKB" id="P15436"/>
    </source>
</evidence>
<evidence type="ECO:0000305" key="3"/>